<proteinExistence type="inferred from homology"/>
<keyword id="KW-0012">Acyltransferase</keyword>
<keyword id="KW-0028">Amino-acid biosynthesis</keyword>
<keyword id="KW-0963">Cytoplasm</keyword>
<keyword id="KW-0486">Methionine biosynthesis</keyword>
<keyword id="KW-0808">Transferase</keyword>
<protein>
    <recommendedName>
        <fullName evidence="1">Homoserine O-acetyltransferase</fullName>
        <shortName evidence="1">HAT</shortName>
        <ecNumber evidence="1">2.3.1.31</ecNumber>
    </recommendedName>
    <alternativeName>
        <fullName evidence="1">Homoserine transacetylase</fullName>
        <shortName evidence="1">HTA</shortName>
    </alternativeName>
</protein>
<feature type="chain" id="PRO_1000021819" description="Homoserine O-acetyltransferase">
    <location>
        <begin position="1"/>
        <end position="319"/>
    </location>
</feature>
<feature type="active site" description="Acyl-thioester intermediate" evidence="1">
    <location>
        <position position="142"/>
    </location>
</feature>
<feature type="active site" description="Proton acceptor" evidence="1">
    <location>
        <position position="235"/>
    </location>
</feature>
<feature type="active site" evidence="1">
    <location>
        <position position="237"/>
    </location>
</feature>
<feature type="binding site" evidence="1">
    <location>
        <position position="163"/>
    </location>
    <ligand>
        <name>substrate</name>
    </ligand>
</feature>
<feature type="binding site" evidence="1">
    <location>
        <position position="192"/>
    </location>
    <ligand>
        <name>substrate</name>
    </ligand>
</feature>
<feature type="binding site" evidence="1">
    <location>
        <position position="249"/>
    </location>
    <ligand>
        <name>substrate</name>
    </ligand>
</feature>
<feature type="site" description="Important for acyl-CoA specificity" evidence="1">
    <location>
        <position position="111"/>
    </location>
</feature>
<feature type="site" description="Important for substrate specificity" evidence="1">
    <location>
        <position position="192"/>
    </location>
</feature>
<name>METAA_LACLM</name>
<accession>A2RN61</accession>
<evidence type="ECO:0000255" key="1">
    <source>
        <dbReference type="HAMAP-Rule" id="MF_00295"/>
    </source>
</evidence>
<gene>
    <name evidence="1" type="primary">metAA</name>
    <name type="ordered locus">llmg_2182</name>
</gene>
<reference key="1">
    <citation type="journal article" date="2007" name="J. Bacteriol.">
        <title>The complete genome sequence of the lactic acid bacterial paradigm Lactococcus lactis subsp. cremoris MG1363.</title>
        <authorList>
            <person name="Wegmann U."/>
            <person name="O'Connell-Motherway M."/>
            <person name="Zomer A."/>
            <person name="Buist G."/>
            <person name="Shearman C."/>
            <person name="Canchaya C."/>
            <person name="Ventura M."/>
            <person name="Goesmann A."/>
            <person name="Gasson M.J."/>
            <person name="Kuipers O.P."/>
            <person name="van Sinderen D."/>
            <person name="Kok J."/>
        </authorList>
    </citation>
    <scope>NUCLEOTIDE SEQUENCE [LARGE SCALE GENOMIC DNA]</scope>
    <source>
        <strain>MG1363</strain>
    </source>
</reference>
<sequence>MPVKVIEGLPAIDELRADNIFVMDNERAKNQNIRPLNLLVVNLMPRKLITDRQILRLLSNTPLQINVDFLFMASHEFKNTKQSHLDSFYKSFSEIKDDYYDGLIITGAPVEQLEFEEVDYWSEFLEIVKWSKSHVYSSLHICWGAQAALYARYEVTKENLPQKLCGIYKSSVEQPKNPLFRGFDDFFNYPQSRYTQSNPSEIKKVPDLEVLSTSKETGFSILAKKNLREVYLFGHLEYDRETLAWEYERDREEGLKPALPKNYFPKDNDKEKPQMSWASAASLFFSNWLNYAVYQGTPYLGERLGHHCGEENYDFNQKE</sequence>
<dbReference type="EC" id="2.3.1.31" evidence="1"/>
<dbReference type="EMBL" id="AM406671">
    <property type="protein sequence ID" value="CAL98749.1"/>
    <property type="molecule type" value="Genomic_DNA"/>
</dbReference>
<dbReference type="RefSeq" id="WP_011835876.1">
    <property type="nucleotide sequence ID" value="NC_009004.1"/>
</dbReference>
<dbReference type="SMR" id="A2RN61"/>
<dbReference type="STRING" id="416870.llmg_2182"/>
<dbReference type="KEGG" id="llm:llmg_2182"/>
<dbReference type="eggNOG" id="COG1897">
    <property type="taxonomic scope" value="Bacteria"/>
</dbReference>
<dbReference type="HOGENOM" id="CLU_057851_0_1_9"/>
<dbReference type="OrthoDB" id="9772423at2"/>
<dbReference type="PhylomeDB" id="A2RN61"/>
<dbReference type="UniPathway" id="UPA00051">
    <property type="reaction ID" value="UER00074"/>
</dbReference>
<dbReference type="Proteomes" id="UP000000364">
    <property type="component" value="Chromosome"/>
</dbReference>
<dbReference type="GO" id="GO:0005737">
    <property type="term" value="C:cytoplasm"/>
    <property type="evidence" value="ECO:0007669"/>
    <property type="project" value="UniProtKB-SubCell"/>
</dbReference>
<dbReference type="GO" id="GO:0004414">
    <property type="term" value="F:homoserine O-acetyltransferase activity"/>
    <property type="evidence" value="ECO:0007669"/>
    <property type="project" value="UniProtKB-EC"/>
</dbReference>
<dbReference type="GO" id="GO:0008899">
    <property type="term" value="F:homoserine O-succinyltransferase activity"/>
    <property type="evidence" value="ECO:0007669"/>
    <property type="project" value="UniProtKB-UniRule"/>
</dbReference>
<dbReference type="GO" id="GO:0019281">
    <property type="term" value="P:L-methionine biosynthetic process from homoserine via O-succinyl-L-homoserine and cystathionine"/>
    <property type="evidence" value="ECO:0007669"/>
    <property type="project" value="InterPro"/>
</dbReference>
<dbReference type="CDD" id="cd03131">
    <property type="entry name" value="GATase1_HTS"/>
    <property type="match status" value="1"/>
</dbReference>
<dbReference type="Gene3D" id="3.40.50.880">
    <property type="match status" value="1"/>
</dbReference>
<dbReference type="HAMAP" id="MF_00295">
    <property type="entry name" value="MetA_acyltransf"/>
    <property type="match status" value="1"/>
</dbReference>
<dbReference type="InterPro" id="IPR029062">
    <property type="entry name" value="Class_I_gatase-like"/>
</dbReference>
<dbReference type="InterPro" id="IPR005697">
    <property type="entry name" value="HST_MetA"/>
</dbReference>
<dbReference type="InterPro" id="IPR033752">
    <property type="entry name" value="MetA_family"/>
</dbReference>
<dbReference type="NCBIfam" id="TIGR01001">
    <property type="entry name" value="metA"/>
    <property type="match status" value="1"/>
</dbReference>
<dbReference type="PANTHER" id="PTHR20919">
    <property type="entry name" value="HOMOSERINE O-SUCCINYLTRANSFERASE"/>
    <property type="match status" value="1"/>
</dbReference>
<dbReference type="PANTHER" id="PTHR20919:SF0">
    <property type="entry name" value="HOMOSERINE O-SUCCINYLTRANSFERASE"/>
    <property type="match status" value="1"/>
</dbReference>
<dbReference type="Pfam" id="PF04204">
    <property type="entry name" value="HTS"/>
    <property type="match status" value="1"/>
</dbReference>
<dbReference type="PIRSF" id="PIRSF000450">
    <property type="entry name" value="H_ser_succinyltr"/>
    <property type="match status" value="1"/>
</dbReference>
<dbReference type="SUPFAM" id="SSF52317">
    <property type="entry name" value="Class I glutamine amidotransferase-like"/>
    <property type="match status" value="1"/>
</dbReference>
<organism>
    <name type="scientific">Lactococcus lactis subsp. cremoris (strain MG1363)</name>
    <dbReference type="NCBI Taxonomy" id="416870"/>
    <lineage>
        <taxon>Bacteria</taxon>
        <taxon>Bacillati</taxon>
        <taxon>Bacillota</taxon>
        <taxon>Bacilli</taxon>
        <taxon>Lactobacillales</taxon>
        <taxon>Streptococcaceae</taxon>
        <taxon>Lactococcus</taxon>
        <taxon>Lactococcus cremoris subsp. cremoris</taxon>
    </lineage>
</organism>
<comment type="function">
    <text evidence="1">Transfers an acetyl group from acetyl-CoA to L-homoserine, forming acetyl-L-homoserine.</text>
</comment>
<comment type="catalytic activity">
    <reaction evidence="1">
        <text>L-homoserine + acetyl-CoA = O-acetyl-L-homoserine + CoA</text>
        <dbReference type="Rhea" id="RHEA:13701"/>
        <dbReference type="ChEBI" id="CHEBI:57287"/>
        <dbReference type="ChEBI" id="CHEBI:57288"/>
        <dbReference type="ChEBI" id="CHEBI:57476"/>
        <dbReference type="ChEBI" id="CHEBI:57716"/>
        <dbReference type="EC" id="2.3.1.31"/>
    </reaction>
</comment>
<comment type="pathway">
    <text evidence="1">Amino-acid biosynthesis; L-methionine biosynthesis via de novo pathway; O-acetyl-L-homoserine from L-homoserine: step 1/1.</text>
</comment>
<comment type="subcellular location">
    <subcellularLocation>
        <location evidence="1">Cytoplasm</location>
    </subcellularLocation>
</comment>
<comment type="similarity">
    <text evidence="1">Belongs to the MetA family.</text>
</comment>